<proteinExistence type="inferred from homology"/>
<protein>
    <recommendedName>
        <fullName>3',5'-cyclic-nucleotide phosphodiesterase</fullName>
        <shortName>3':5'-CNP</shortName>
        <shortName>PDEase</shortName>
        <ecNumber>3.1.4.17</ecNumber>
    </recommendedName>
</protein>
<organism>
    <name type="scientific">Candida albicans</name>
    <name type="common">Yeast</name>
    <dbReference type="NCBI Taxonomy" id="5476"/>
    <lineage>
        <taxon>Eukaryota</taxon>
        <taxon>Fungi</taxon>
        <taxon>Dikarya</taxon>
        <taxon>Ascomycota</taxon>
        <taxon>Saccharomycotina</taxon>
        <taxon>Pichiomycetes</taxon>
        <taxon>Debaryomycetaceae</taxon>
        <taxon>Candida/Lodderomyces clade</taxon>
        <taxon>Candida</taxon>
    </lineage>
</organism>
<sequence length="426" mass="47982">MSFEITILGSSGGPLEGSTCSILLKPANISYHDIINDNLPDQVLCIDAGSGMGKLTEIIHQETTTKTSYCNFLQYYPDCETVSYYYHPNVTITTPFSNFQPGRPILHTQNIFNNLQNYLISHSHLDHVCSVVINSAGFNKNMSNKILYGSHYTINAMQQHLFNGKVWPNMPSFKIVNLNYLESNRSERIGIYTVKMFDLSHGEFNKLTEDKEDAQHHSNSNSNSNNIWGKRYDRRRSSITTIPQNTSGLIIKNSEALNHHYLSSAFLITLEVPCTTKEPPPSILVFGDFESDLTSKLSRNLFIWKSIASLILRNQLKAIVLECSNCKEIAANELYGHLTPKLLIYELKQLEHECKQLDTATTSTEQPLLGLNVIVNHVKEPIADPNQESQLHDPRKRILAELNKLNEIEKLGCNISIALSGTSIIV</sequence>
<evidence type="ECO:0000256" key="1">
    <source>
        <dbReference type="SAM" id="MobiDB-lite"/>
    </source>
</evidence>
<evidence type="ECO:0000305" key="2"/>
<gene>
    <name type="primary">PDE1</name>
</gene>
<comment type="catalytic activity">
    <reaction>
        <text>a nucleoside 3',5'-cyclic phosphate + H2O = a nucleoside 5'-phosphate + H(+)</text>
        <dbReference type="Rhea" id="RHEA:14653"/>
        <dbReference type="ChEBI" id="CHEBI:15377"/>
        <dbReference type="ChEBI" id="CHEBI:15378"/>
        <dbReference type="ChEBI" id="CHEBI:57867"/>
        <dbReference type="ChEBI" id="CHEBI:58464"/>
        <dbReference type="EC" id="3.1.4.17"/>
    </reaction>
</comment>
<comment type="similarity">
    <text evidence="2">Belongs to the cyclic nucleotide phosphodiesterase class-II family.</text>
</comment>
<keyword id="KW-0114">cAMP</keyword>
<keyword id="KW-0378">Hydrolase</keyword>
<reference key="1">
    <citation type="journal article" date="1994" name="Microbiology">
        <title>A Candida albicans cyclic nucleotide phosphodiesterase: cloning and expression in Saccharomyces cerevisiae and biochemical characterization of the recombinant enzyme.</title>
        <authorList>
            <person name="Hoyer L.L."/>
            <person name="Cieslinski L.B."/>
            <person name="McLaughlin M.M."/>
            <person name="Torphy T.J."/>
            <person name="Livi G.P."/>
            <person name="Shatzman A.R."/>
        </authorList>
    </citation>
    <scope>NUCLEOTIDE SEQUENCE [GENOMIC DNA]</scope>
    <source>
        <strain>ATCC 11651 / B792 / 171D</strain>
    </source>
</reference>
<feature type="chain" id="PRO_0000206789" description="3',5'-cyclic-nucleotide phosphodiesterase">
    <location>
        <begin position="1"/>
        <end position="426"/>
    </location>
</feature>
<feature type="region of interest" description="Disordered" evidence="1">
    <location>
        <begin position="210"/>
        <end position="229"/>
    </location>
</feature>
<name>PDE1_CANAX</name>
<dbReference type="EC" id="3.1.4.17"/>
<dbReference type="EMBL" id="L12045">
    <property type="protein sequence ID" value="AAA34355.2"/>
    <property type="molecule type" value="Genomic_DNA"/>
</dbReference>
<dbReference type="SMR" id="P32782"/>
<dbReference type="VEuPathDB" id="FungiDB:C5_02290W_A"/>
<dbReference type="VEuPathDB" id="FungiDB:CAWG_04611"/>
<dbReference type="GO" id="GO:0004115">
    <property type="term" value="F:3',5'-cyclic-AMP phosphodiesterase activity"/>
    <property type="evidence" value="ECO:0007669"/>
    <property type="project" value="InterPro"/>
</dbReference>
<dbReference type="GO" id="GO:0047555">
    <property type="term" value="F:3',5'-cyclic-GMP phosphodiesterase activity"/>
    <property type="evidence" value="ECO:0007669"/>
    <property type="project" value="TreeGrafter"/>
</dbReference>
<dbReference type="GO" id="GO:0006198">
    <property type="term" value="P:cAMP catabolic process"/>
    <property type="evidence" value="ECO:0007669"/>
    <property type="project" value="InterPro"/>
</dbReference>
<dbReference type="GO" id="GO:1902660">
    <property type="term" value="P:negative regulation of glucose mediated signaling pathway"/>
    <property type="evidence" value="ECO:0007669"/>
    <property type="project" value="TreeGrafter"/>
</dbReference>
<dbReference type="CDD" id="cd07735">
    <property type="entry name" value="class_II_PDE_MBL-fold"/>
    <property type="match status" value="1"/>
</dbReference>
<dbReference type="Gene3D" id="3.60.15.10">
    <property type="entry name" value="Ribonuclease Z/Hydroxyacylglutathione hydrolase-like"/>
    <property type="match status" value="1"/>
</dbReference>
<dbReference type="InterPro" id="IPR024225">
    <property type="entry name" value="cAMP-PdiesteraseII_CS"/>
</dbReference>
<dbReference type="InterPro" id="IPR000396">
    <property type="entry name" value="Pdiesterase2"/>
</dbReference>
<dbReference type="InterPro" id="IPR036866">
    <property type="entry name" value="RibonucZ/Hydroxyglut_hydro"/>
</dbReference>
<dbReference type="PANTHER" id="PTHR28283">
    <property type="entry name" value="3',5'-CYCLIC-NUCLEOTIDE PHOSPHODIESTERASE 1"/>
    <property type="match status" value="1"/>
</dbReference>
<dbReference type="PANTHER" id="PTHR28283:SF1">
    <property type="entry name" value="3',5'-CYCLIC-NUCLEOTIDE PHOSPHODIESTERASE 1"/>
    <property type="match status" value="1"/>
</dbReference>
<dbReference type="Pfam" id="PF02112">
    <property type="entry name" value="PDEase_II"/>
    <property type="match status" value="1"/>
</dbReference>
<dbReference type="PIRSF" id="PIRSF000962">
    <property type="entry name" value="Cyc_nuc_PDEase"/>
    <property type="match status" value="1"/>
</dbReference>
<dbReference type="PRINTS" id="PR00388">
    <property type="entry name" value="PDIESTERASE2"/>
</dbReference>
<dbReference type="SUPFAM" id="SSF56281">
    <property type="entry name" value="Metallo-hydrolase/oxidoreductase"/>
    <property type="match status" value="1"/>
</dbReference>
<dbReference type="PROSITE" id="PS00607">
    <property type="entry name" value="PDEASE_II"/>
    <property type="match status" value="1"/>
</dbReference>
<accession>P32782</accession>